<feature type="chain" id="PRO_0000049421" description="DNA replication terminus site-binding protein">
    <location>
        <begin position="1"/>
        <end position="309"/>
    </location>
</feature>
<reference key="1">
    <citation type="journal article" date="2005" name="Nucleic Acids Res.">
        <title>Genome dynamics and diversity of Shigella species, the etiologic agents of bacillary dysentery.</title>
        <authorList>
            <person name="Yang F."/>
            <person name="Yang J."/>
            <person name="Zhang X."/>
            <person name="Chen L."/>
            <person name="Jiang Y."/>
            <person name="Yan Y."/>
            <person name="Tang X."/>
            <person name="Wang J."/>
            <person name="Xiong Z."/>
            <person name="Dong J."/>
            <person name="Xue Y."/>
            <person name="Zhu Y."/>
            <person name="Xu X."/>
            <person name="Sun L."/>
            <person name="Chen S."/>
            <person name="Nie H."/>
            <person name="Peng J."/>
            <person name="Xu J."/>
            <person name="Wang Y."/>
            <person name="Yuan Z."/>
            <person name="Wen Y."/>
            <person name="Yao Z."/>
            <person name="Shen Y."/>
            <person name="Qiang B."/>
            <person name="Hou Y."/>
            <person name="Yu J."/>
            <person name="Jin Q."/>
        </authorList>
    </citation>
    <scope>NUCLEOTIDE SEQUENCE [LARGE SCALE GENOMIC DNA]</scope>
    <source>
        <strain>Sb227</strain>
    </source>
</reference>
<sequence length="309" mass="35727">MARYDLVDRLNTTFRQMEQELAAFAAHLEQHKLLVARVFSLPEVKKEDEHNPLNRIEVKQHLGNDAQSLALRHFRHLFIQQQSENRSSKAAVRLPGVLCYQVDNLSQAALVSHIQHINKLKTTFEHIVTVESELPTAARFEWVHRHLPGLITLNAYRSLTVLHDPATLRFGWANKHIIKNLHRDEVLAQLEKSLKSPRSVAPWTREEWQRKLEREYQDIAALPQNAKLKIKRPVKVQPIARVWYKGDQKQVQHACPTPLIALINRDNGAGVPDVGELLNYDADNVQHRYKPQAQPLRLIIPRLHLYVAD</sequence>
<gene>
    <name evidence="1" type="primary">tus</name>
    <name type="ordered locus">SBO_1526</name>
</gene>
<evidence type="ECO:0000255" key="1">
    <source>
        <dbReference type="HAMAP-Rule" id="MF_00483"/>
    </source>
</evidence>
<protein>
    <recommendedName>
        <fullName evidence="1">DNA replication terminus site-binding protein</fullName>
        <shortName evidence="1">Ter-binding protein</shortName>
    </recommendedName>
</protein>
<dbReference type="EMBL" id="CP000036">
    <property type="protein sequence ID" value="ABB66142.1"/>
    <property type="molecule type" value="Genomic_DNA"/>
</dbReference>
<dbReference type="RefSeq" id="WP_001399164.1">
    <property type="nucleotide sequence ID" value="NC_007613.1"/>
</dbReference>
<dbReference type="SMR" id="Q320W6"/>
<dbReference type="KEGG" id="sbo:SBO_1526"/>
<dbReference type="HOGENOM" id="CLU_078181_0_0_6"/>
<dbReference type="Proteomes" id="UP000007067">
    <property type="component" value="Chromosome"/>
</dbReference>
<dbReference type="GO" id="GO:0005737">
    <property type="term" value="C:cytoplasm"/>
    <property type="evidence" value="ECO:0007669"/>
    <property type="project" value="UniProtKB-SubCell"/>
</dbReference>
<dbReference type="GO" id="GO:0003677">
    <property type="term" value="F:DNA binding"/>
    <property type="evidence" value="ECO:0007669"/>
    <property type="project" value="UniProtKB-UniRule"/>
</dbReference>
<dbReference type="GO" id="GO:0006274">
    <property type="term" value="P:DNA replication termination"/>
    <property type="evidence" value="ECO:0007669"/>
    <property type="project" value="UniProtKB-UniRule"/>
</dbReference>
<dbReference type="Gene3D" id="3.30.54.10">
    <property type="match status" value="1"/>
</dbReference>
<dbReference type="Gene3D" id="3.50.14.10">
    <property type="entry name" value="Replication terminator Tus, domain 1 superfamily/Replication terminator Tus"/>
    <property type="match status" value="1"/>
</dbReference>
<dbReference type="HAMAP" id="MF_00483">
    <property type="entry name" value="Rep_term_Tus"/>
    <property type="match status" value="1"/>
</dbReference>
<dbReference type="InterPro" id="IPR008865">
    <property type="entry name" value="DNA_replication_term_site-bd"/>
</dbReference>
<dbReference type="InterPro" id="IPR036381">
    <property type="entry name" value="Tus_dom1"/>
</dbReference>
<dbReference type="InterPro" id="IPR036384">
    <property type="entry name" value="Tus_sf"/>
</dbReference>
<dbReference type="NCBIfam" id="TIGR02648">
    <property type="entry name" value="rep_term_tus"/>
    <property type="match status" value="1"/>
</dbReference>
<dbReference type="Pfam" id="PF05472">
    <property type="entry name" value="Ter"/>
    <property type="match status" value="1"/>
</dbReference>
<dbReference type="SUPFAM" id="SSF56596">
    <property type="entry name" value="Replication terminator protein (Tus)"/>
    <property type="match status" value="1"/>
</dbReference>
<name>TUS_SHIBS</name>
<proteinExistence type="inferred from homology"/>
<keyword id="KW-0963">Cytoplasm</keyword>
<keyword id="KW-0235">DNA replication</keyword>
<keyword id="KW-0238">DNA-binding</keyword>
<accession>Q320W6</accession>
<comment type="function">
    <text evidence="1">Trans-acting protein required for termination of DNA replication. Binds to DNA replication terminator sequences (terA to terF) to prevent the passage of replication forks. The termination efficiency will be affected by the affinity of this protein for the terminator sequence.</text>
</comment>
<comment type="subcellular location">
    <subcellularLocation>
        <location evidence="1">Cytoplasm</location>
    </subcellularLocation>
</comment>
<comment type="similarity">
    <text evidence="1">Belongs to the Tus family.</text>
</comment>
<organism>
    <name type="scientific">Shigella boydii serotype 4 (strain Sb227)</name>
    <dbReference type="NCBI Taxonomy" id="300268"/>
    <lineage>
        <taxon>Bacteria</taxon>
        <taxon>Pseudomonadati</taxon>
        <taxon>Pseudomonadota</taxon>
        <taxon>Gammaproteobacteria</taxon>
        <taxon>Enterobacterales</taxon>
        <taxon>Enterobacteriaceae</taxon>
        <taxon>Shigella</taxon>
    </lineage>
</organism>